<keyword id="KW-0002">3D-structure</keyword>
<keyword id="KW-0007">Acetylation</keyword>
<keyword id="KW-0114">cAMP</keyword>
<keyword id="KW-0116">cAMP-binding</keyword>
<keyword id="KW-1003">Cell membrane</keyword>
<keyword id="KW-0963">Cytoplasm</keyword>
<keyword id="KW-0472">Membrane</keyword>
<keyword id="KW-0547">Nucleotide-binding</keyword>
<keyword id="KW-0597">Phosphoprotein</keyword>
<keyword id="KW-1185">Reference proteome</keyword>
<keyword id="KW-0677">Repeat</keyword>
<reference key="1">
    <citation type="journal article" date="1987" name="Proc. Natl. Acad. Sci. U.S.A.">
        <title>The molecular cloning of a type II regulatory subunit of the cAMP-dependent protein kinase from rat skeletal muscle and mouse brain.</title>
        <authorList>
            <person name="Scott J.D."/>
            <person name="Glaccum M.B."/>
            <person name="Zoller M.J."/>
            <person name="Uhler M.D."/>
            <person name="Helfman D.M."/>
            <person name="McKnight G.S."/>
            <person name="Krebs E.G."/>
        </authorList>
    </citation>
    <scope>NUCLEOTIDE SEQUENCE [MRNA]</scope>
    <source>
        <tissue>Brain</tissue>
    </source>
</reference>
<reference key="2">
    <citation type="journal article" date="1998" name="J. Biol. Chem.">
        <title>Identification of tethering domains for protein kinase A type Ialpha regulatory subunits on sperm fibrous sheath protein FSC1.</title>
        <authorList>
            <person name="Miki K."/>
            <person name="Eddy E.M."/>
        </authorList>
    </citation>
    <scope>INTERACTION WITH AKAP4</scope>
</reference>
<reference key="3">
    <citation type="journal article" date="2006" name="Mol. Cell. Proteomics">
        <title>Comprehensive identification of phosphorylation sites in postsynaptic density preparations.</title>
        <authorList>
            <person name="Trinidad J.C."/>
            <person name="Specht C.G."/>
            <person name="Thalhammer A."/>
            <person name="Schoepfer R."/>
            <person name="Burlingame A.L."/>
        </authorList>
    </citation>
    <scope>IDENTIFICATION BY MASS SPECTROMETRY [LARGE SCALE ANALYSIS]</scope>
    <source>
        <tissue>Brain</tissue>
    </source>
</reference>
<reference key="4">
    <citation type="journal article" date="2007" name="J. Biol. Chem.">
        <title>MyRIP anchors protein kinase A to the exocyst complex.</title>
        <authorList>
            <person name="Goehring A.S."/>
            <person name="Pedroja B.S."/>
            <person name="Hinke S.A."/>
            <person name="Langeberg L.K."/>
            <person name="Scott J.D."/>
        </authorList>
    </citation>
    <scope>INTERACTION WITH MYRIP</scope>
</reference>
<reference key="5">
    <citation type="journal article" date="2007" name="Proc. Natl. Acad. Sci. U.S.A.">
        <title>Large-scale phosphorylation analysis of mouse liver.</title>
        <authorList>
            <person name="Villen J."/>
            <person name="Beausoleil S.A."/>
            <person name="Gerber S.A."/>
            <person name="Gygi S.P."/>
        </authorList>
    </citation>
    <scope>PHOSPHORYLATION [LARGE SCALE ANALYSIS] AT SER-96</scope>
    <scope>IDENTIFICATION BY MASS SPECTROMETRY [LARGE SCALE ANALYSIS]</scope>
    <source>
        <tissue>Liver</tissue>
    </source>
</reference>
<reference key="6">
    <citation type="journal article" date="2009" name="Mol. Cell. Proteomics">
        <title>Large scale localization of protein phosphorylation by use of electron capture dissociation mass spectrometry.</title>
        <authorList>
            <person name="Sweet S.M."/>
            <person name="Bailey C.M."/>
            <person name="Cunningham D.L."/>
            <person name="Heath J.K."/>
            <person name="Cooper H.J."/>
        </authorList>
    </citation>
    <scope>IDENTIFICATION BY MASS SPECTROMETRY [LARGE SCALE ANALYSIS]</scope>
    <source>
        <tissue>Embryonic fibroblast</tissue>
    </source>
</reference>
<reference key="7">
    <citation type="journal article" date="2010" name="Cell">
        <title>A tissue-specific atlas of mouse protein phosphorylation and expression.</title>
        <authorList>
            <person name="Huttlin E.L."/>
            <person name="Jedrychowski M.P."/>
            <person name="Elias J.E."/>
            <person name="Goswami T."/>
            <person name="Rad R."/>
            <person name="Beausoleil S.A."/>
            <person name="Villen J."/>
            <person name="Haas W."/>
            <person name="Sowa M.E."/>
            <person name="Gygi S.P."/>
        </authorList>
    </citation>
    <scope>PHOSPHORYLATION [LARGE SCALE ANALYSIS] AT SER-96 AND SER-392</scope>
    <scope>IDENTIFICATION BY MASS SPECTROMETRY [LARGE SCALE ANALYSIS]</scope>
    <source>
        <tissue>Brain</tissue>
        <tissue>Brown adipose tissue</tissue>
        <tissue>Heart</tissue>
        <tissue>Kidney</tissue>
        <tissue>Liver</tissue>
        <tissue>Lung</tissue>
        <tissue>Pancreas</tissue>
        <tissue>Spleen</tissue>
        <tissue>Testis</tissue>
    </source>
</reference>
<reference key="8">
    <citation type="journal article" date="1999" name="Nat. Struct. Biol.">
        <title>The molecular basis for protein kinase A anchoring revealed by solution NMR.</title>
        <authorList>
            <person name="Newlon M.G."/>
            <person name="Roy M."/>
            <person name="Morikis D."/>
            <person name="Hausken Z.E."/>
            <person name="Coghlan V."/>
            <person name="Scott J.D."/>
            <person name="Jennings P.A."/>
        </authorList>
    </citation>
    <scope>STRUCTURE BY NMR OF 1-44</scope>
</reference>
<reference key="9">
    <citation type="journal article" date="2006" name="Mol. Cell">
        <title>Molecular basis of AKAP specificity for PKA regulatory subunits.</title>
        <authorList>
            <person name="Gold M.G."/>
            <person name="Lygren B."/>
            <person name="Dokurno P."/>
            <person name="Hoshi N."/>
            <person name="McConnachie G."/>
            <person name="Tasken K."/>
            <person name="Carlson C.R."/>
            <person name="Scott J.D."/>
            <person name="Barford D."/>
        </authorList>
    </citation>
    <scope>X-RAY CRYSTALLOGRAPHY (2.2 ANGSTROMS) OF 1-44</scope>
</reference>
<name>KAP2_MOUSE</name>
<protein>
    <recommendedName>
        <fullName>cAMP-dependent protein kinase type II-alpha regulatory subunit</fullName>
    </recommendedName>
</protein>
<sequence>MSHIQIPPGLTELLQGYTVEVGQQPPDLVDFAVEYFTRLREARRQESDTFIVSPTTFHTQESSAVPVIEEDGESDSDSEDADLEVPVPSKFTRRVSVCAETFNPDEEEEDNDPRVVHPKTDEQRCRLQEACKDILLFKNLDQEQLSQVLDAMFEKIVKTDEHVIDQGDDGDNFYVIERGTYDILVTKDNQTRSVGQYDNRGSFGELALMYNTPRAATIIATSEGSLWGLDRVTFRRIIVKNNAKKRKMFESFIESVPLFKSLEMSERMKIVDVIGEKIYKDGERIIAQGEKADSFYIIESGEVSILIRSKTKSNKNGGNQEVEIAHCHKGQYFGELALVTNKPRAASAYGVGDVKCLVMDVQAFERLLGPCMDIMKRNISHYEEQLVKMFGSNLDLMDPGQ</sequence>
<accession>P12367</accession>
<comment type="function">
    <text>Regulatory subunit of the cAMP-dependent protein kinases involved in cAMP signaling in cells. Type II regulatory chains mediate membrane association by binding to anchoring proteins, including the MAP2 kinase.</text>
</comment>
<comment type="subunit">
    <text evidence="1 3">The inactive form of the enzyme is composed of two regulatory chains and two catalytic chains. Activation by cAMP produces two active catalytic monomers and a regulatory dimer that binds four cAMP molecules. Interacts with AKAP4. Interacts with CBFA2T3 (By similarity). Interacts with the phosphorylated form of PJA2 (By similarity). Interacts with MYRIP. This interaction may link PKA to components of the exocytosis machinery, thus facilitating exocytosis, including insulin release (By similarity). Forms a complex composed of PRKAR2A, GSK3B and GSKIP through GSKIP interaction; facilitates PKA-induced phosphorylation and regulates GSK3B activity (By similarity). Interacts with ADCY8; inhibits adenylate cyclase activity through PKA phosphorylation (By similarity).</text>
</comment>
<comment type="interaction">
    <interactant intactId="EBI-645747">
        <id>P12367</id>
    </interactant>
    <interactant intactId="EBI-7091108">
        <id>D3YVF0</id>
        <label>Akap5</label>
    </interactant>
    <organismsDiffer>false</organismsDiffer>
    <experiments>2</experiments>
</comment>
<comment type="interaction">
    <interactant intactId="EBI-645747">
        <id>P12367</id>
    </interactant>
    <interactant intactId="EBI-645828">
        <id>O54931-3</id>
        <label>Pakap</label>
    </interactant>
    <organismsDiffer>false</organismsDiffer>
    <experiments>3</experiments>
</comment>
<comment type="subcellular location">
    <subcellularLocation>
        <location evidence="1">Cytoplasm</location>
    </subcellularLocation>
    <subcellularLocation>
        <location evidence="1">Cell membrane</location>
    </subcellularLocation>
    <text evidence="1">Colocalizes with PJA2 in the cytoplasm and the cell membrane.</text>
</comment>
<comment type="tissue specificity">
    <text>Four types of regulatory chains are found: I-alpha, I-beta, II-alpha, and II-beta. Their expression varies among tissues and is in some cases constitutive and in others inducible.</text>
</comment>
<comment type="PTM">
    <text>Phosphorylated by the activated catalytic chain.</text>
</comment>
<comment type="similarity">
    <text evidence="5">Belongs to the cAMP-dependent kinase regulatory chain family.</text>
</comment>
<organism>
    <name type="scientific">Mus musculus</name>
    <name type="common">Mouse</name>
    <dbReference type="NCBI Taxonomy" id="10090"/>
    <lineage>
        <taxon>Eukaryota</taxon>
        <taxon>Metazoa</taxon>
        <taxon>Chordata</taxon>
        <taxon>Craniata</taxon>
        <taxon>Vertebrata</taxon>
        <taxon>Euteleostomi</taxon>
        <taxon>Mammalia</taxon>
        <taxon>Eutheria</taxon>
        <taxon>Euarchontoglires</taxon>
        <taxon>Glires</taxon>
        <taxon>Rodentia</taxon>
        <taxon>Myomorpha</taxon>
        <taxon>Muroidea</taxon>
        <taxon>Muridae</taxon>
        <taxon>Murinae</taxon>
        <taxon>Mus</taxon>
        <taxon>Mus</taxon>
    </lineage>
</organism>
<feature type="initiator methionine" description="Removed">
    <location>
        <position position="1"/>
    </location>
</feature>
<feature type="chain" id="PRO_0000205386" description="cAMP-dependent protein kinase type II-alpha regulatory subunit">
    <location>
        <begin position="2"/>
        <end position="401"/>
    </location>
</feature>
<feature type="region of interest" description="Dimerization and phosphorylation">
    <location>
        <begin position="2"/>
        <end position="135"/>
    </location>
</feature>
<feature type="region of interest" description="Disordered" evidence="4">
    <location>
        <begin position="61"/>
        <end position="83"/>
    </location>
</feature>
<feature type="compositionally biased region" description="Acidic residues" evidence="4">
    <location>
        <begin position="68"/>
        <end position="83"/>
    </location>
</feature>
<feature type="binding site">
    <location>
        <begin position="136"/>
        <end position="257"/>
    </location>
    <ligand>
        <name>3',5'-cyclic AMP</name>
        <dbReference type="ChEBI" id="CHEBI:58165"/>
        <label>1</label>
    </ligand>
</feature>
<feature type="binding site">
    <location>
        <position position="205"/>
    </location>
    <ligand>
        <name>3',5'-cyclic AMP</name>
        <dbReference type="ChEBI" id="CHEBI:58165"/>
        <label>1</label>
    </ligand>
</feature>
<feature type="binding site">
    <location>
        <position position="214"/>
    </location>
    <ligand>
        <name>3',5'-cyclic AMP</name>
        <dbReference type="ChEBI" id="CHEBI:58165"/>
        <label>1</label>
    </ligand>
</feature>
<feature type="binding site">
    <location>
        <begin position="258"/>
        <end position="401"/>
    </location>
    <ligand>
        <name>3',5'-cyclic AMP</name>
        <dbReference type="ChEBI" id="CHEBI:58165"/>
        <label>2</label>
    </ligand>
</feature>
<feature type="binding site">
    <location>
        <position position="335"/>
    </location>
    <ligand>
        <name>3',5'-cyclic AMP</name>
        <dbReference type="ChEBI" id="CHEBI:58165"/>
        <label>2</label>
    </ligand>
</feature>
<feature type="binding site">
    <location>
        <position position="344"/>
    </location>
    <ligand>
        <name>3',5'-cyclic AMP</name>
        <dbReference type="ChEBI" id="CHEBI:58165"/>
        <label>2</label>
    </ligand>
</feature>
<feature type="modified residue" description="N-acetylserine" evidence="3 5">
    <location>
        <position position="2"/>
    </location>
</feature>
<feature type="modified residue" description="Phosphoserine" evidence="3">
    <location>
        <position position="47"/>
    </location>
</feature>
<feature type="modified residue" description="Phosphoserine" evidence="3">
    <location>
        <position position="74"/>
    </location>
</feature>
<feature type="modified residue" description="Phosphoserine" evidence="3">
    <location>
        <position position="76"/>
    </location>
</feature>
<feature type="modified residue" description="Phosphoserine" evidence="6 7">
    <location>
        <position position="96"/>
    </location>
</feature>
<feature type="modified residue" description="Phosphothreonine; by PDPK1" evidence="2">
    <location>
        <position position="212"/>
    </location>
</feature>
<feature type="modified residue" description="Phosphoserine" evidence="3">
    <location>
        <position position="347"/>
    </location>
</feature>
<feature type="modified residue" description="Phosphoserine" evidence="7">
    <location>
        <position position="392"/>
    </location>
</feature>
<feature type="helix" evidence="8">
    <location>
        <begin position="10"/>
        <end position="23"/>
    </location>
</feature>
<feature type="helix" evidence="8">
    <location>
        <begin position="28"/>
        <end position="44"/>
    </location>
</feature>
<feature type="helix" evidence="9">
    <location>
        <begin position="121"/>
        <end position="131"/>
    </location>
</feature>
<feature type="helix" evidence="9">
    <location>
        <begin position="135"/>
        <end position="138"/>
    </location>
</feature>
<feature type="helix" evidence="9">
    <location>
        <begin position="142"/>
        <end position="151"/>
    </location>
</feature>
<feature type="strand" evidence="9">
    <location>
        <begin position="153"/>
        <end position="157"/>
    </location>
</feature>
<feature type="strand" evidence="9">
    <location>
        <begin position="162"/>
        <end position="164"/>
    </location>
</feature>
<feature type="strand" evidence="9">
    <location>
        <begin position="172"/>
        <end position="178"/>
    </location>
</feature>
<feature type="strand" evidence="9">
    <location>
        <begin position="180"/>
        <end position="187"/>
    </location>
</feature>
<feature type="strand" evidence="9">
    <location>
        <begin position="190"/>
        <end position="199"/>
    </location>
</feature>
<feature type="helix" evidence="9">
    <location>
        <begin position="205"/>
        <end position="208"/>
    </location>
</feature>
<feature type="strand" evidence="9">
    <location>
        <begin position="215"/>
        <end position="230"/>
    </location>
</feature>
<feature type="helix" evidence="9">
    <location>
        <begin position="231"/>
        <end position="254"/>
    </location>
</feature>
<feature type="helix" evidence="9">
    <location>
        <begin position="257"/>
        <end position="259"/>
    </location>
</feature>
<feature type="helix" evidence="9">
    <location>
        <begin position="264"/>
        <end position="273"/>
    </location>
</feature>
<feature type="strand" evidence="9">
    <location>
        <begin position="275"/>
        <end position="279"/>
    </location>
</feature>
<feature type="strand" evidence="9">
    <location>
        <begin position="284"/>
        <end position="286"/>
    </location>
</feature>
<feature type="strand" evidence="9">
    <location>
        <begin position="294"/>
        <end position="307"/>
    </location>
</feature>
<feature type="strand" evidence="9">
    <location>
        <begin position="311"/>
        <end position="315"/>
    </location>
</feature>
<feature type="strand" evidence="9">
    <location>
        <begin position="322"/>
        <end position="328"/>
    </location>
</feature>
<feature type="helix" evidence="9">
    <location>
        <begin position="335"/>
        <end position="338"/>
    </location>
</feature>
<feature type="strand" evidence="9">
    <location>
        <begin position="345"/>
        <end position="360"/>
    </location>
</feature>
<feature type="helix" evidence="9">
    <location>
        <begin position="361"/>
        <end position="368"/>
    </location>
</feature>
<feature type="helix" evidence="9">
    <location>
        <begin position="371"/>
        <end position="377"/>
    </location>
</feature>
<feature type="helix" evidence="9">
    <location>
        <begin position="379"/>
        <end position="381"/>
    </location>
</feature>
<feature type="helix" evidence="9">
    <location>
        <begin position="382"/>
        <end position="390"/>
    </location>
</feature>
<gene>
    <name type="primary">Prkar2a</name>
</gene>
<evidence type="ECO:0000250" key="1"/>
<evidence type="ECO:0000250" key="2">
    <source>
        <dbReference type="UniProtKB" id="P00515"/>
    </source>
</evidence>
<evidence type="ECO:0000250" key="3">
    <source>
        <dbReference type="UniProtKB" id="P13861"/>
    </source>
</evidence>
<evidence type="ECO:0000256" key="4">
    <source>
        <dbReference type="SAM" id="MobiDB-lite"/>
    </source>
</evidence>
<evidence type="ECO:0000305" key="5"/>
<evidence type="ECO:0007744" key="6">
    <source>
    </source>
</evidence>
<evidence type="ECO:0007744" key="7">
    <source>
    </source>
</evidence>
<evidence type="ECO:0007829" key="8">
    <source>
        <dbReference type="PDB" id="2IZY"/>
    </source>
</evidence>
<evidence type="ECO:0007829" key="9">
    <source>
        <dbReference type="PDB" id="2QVS"/>
    </source>
</evidence>
<proteinExistence type="evidence at protein level"/>
<dbReference type="EMBL" id="J02935">
    <property type="protein sequence ID" value="AAA39932.1"/>
    <property type="molecule type" value="mRNA"/>
</dbReference>
<dbReference type="PIR" id="B28325">
    <property type="entry name" value="OKMS2R"/>
</dbReference>
<dbReference type="PDB" id="1L6E">
    <property type="method" value="NMR"/>
    <property type="chains" value="A/B=1-44"/>
</dbReference>
<dbReference type="PDB" id="1R2A">
    <property type="method" value="NMR"/>
    <property type="chains" value="A/B=3-44"/>
</dbReference>
<dbReference type="PDB" id="2IZY">
    <property type="method" value="X-ray"/>
    <property type="resolution" value="2.20 A"/>
    <property type="chains" value="A/B/C/D/E/F/G/H=3-44"/>
</dbReference>
<dbReference type="PDB" id="2QVS">
    <property type="method" value="X-ray"/>
    <property type="resolution" value="2.50 A"/>
    <property type="chains" value="B=92-401"/>
</dbReference>
<dbReference type="PDB" id="3J4Q">
    <property type="method" value="EM"/>
    <property type="resolution" value="35.00 A"/>
    <property type="chains" value="B/C=1-401"/>
</dbReference>
<dbReference type="PDB" id="3J4R">
    <property type="method" value="EM"/>
    <property type="resolution" value="35.00 A"/>
    <property type="chains" value="B/C=1-401"/>
</dbReference>
<dbReference type="PDBsum" id="1L6E"/>
<dbReference type="PDBsum" id="1R2A"/>
<dbReference type="PDBsum" id="2IZY"/>
<dbReference type="PDBsum" id="2QVS"/>
<dbReference type="PDBsum" id="3J4Q"/>
<dbReference type="PDBsum" id="3J4R"/>
<dbReference type="EMDB" id="EMD-5755"/>
<dbReference type="EMDB" id="EMD-5756"/>
<dbReference type="SMR" id="P12367"/>
<dbReference type="CORUM" id="P12367"/>
<dbReference type="FunCoup" id="P12367">
    <property type="interactions" value="1061"/>
</dbReference>
<dbReference type="IntAct" id="P12367">
    <property type="interactions" value="9"/>
</dbReference>
<dbReference type="MINT" id="P12367"/>
<dbReference type="STRING" id="10090.ENSMUSP00000035220"/>
<dbReference type="iPTMnet" id="P12367"/>
<dbReference type="PhosphoSitePlus" id="P12367"/>
<dbReference type="SwissPalm" id="P12367"/>
<dbReference type="jPOST" id="P12367"/>
<dbReference type="PaxDb" id="10090-ENSMUSP00000035220"/>
<dbReference type="PeptideAtlas" id="P12367"/>
<dbReference type="ProteomicsDB" id="263388"/>
<dbReference type="Pumba" id="P12367"/>
<dbReference type="AGR" id="MGI:108025"/>
<dbReference type="MGI" id="MGI:108025">
    <property type="gene designation" value="Prkar2a"/>
</dbReference>
<dbReference type="eggNOG" id="KOG1113">
    <property type="taxonomic scope" value="Eukaryota"/>
</dbReference>
<dbReference type="InParanoid" id="P12367"/>
<dbReference type="PhylomeDB" id="P12367"/>
<dbReference type="Reactome" id="R-MMU-163615">
    <property type="pathway name" value="PKA activation"/>
</dbReference>
<dbReference type="Reactome" id="R-MMU-164378">
    <property type="pathway name" value="PKA activation in glucagon signalling"/>
</dbReference>
<dbReference type="Reactome" id="R-MMU-180024">
    <property type="pathway name" value="DARPP-32 events"/>
</dbReference>
<dbReference type="Reactome" id="R-MMU-432040">
    <property type="pathway name" value="Vasopressin regulates renal water homeostasis via Aquaporins"/>
</dbReference>
<dbReference type="Reactome" id="R-MMU-442720">
    <property type="pathway name" value="CREB1 phosphorylation through the activation of Adenylate Cyclase"/>
</dbReference>
<dbReference type="Reactome" id="R-MMU-5610787">
    <property type="pathway name" value="Hedgehog 'off' state"/>
</dbReference>
<dbReference type="Reactome" id="R-MMU-9634597">
    <property type="pathway name" value="GPER1 signaling"/>
</dbReference>
<dbReference type="Reactome" id="R-MMU-983231">
    <property type="pathway name" value="Factors involved in megakaryocyte development and platelet production"/>
</dbReference>
<dbReference type="Reactome" id="R-MMU-9856530">
    <property type="pathway name" value="High laminar flow shear stress activates signaling by PIEZO1 and PECAM1:CDH5:KDR in endothelial cells"/>
</dbReference>
<dbReference type="CD-CODE" id="CE726F99">
    <property type="entry name" value="Postsynaptic density"/>
</dbReference>
<dbReference type="ChiTaRS" id="Prkar2a">
    <property type="organism name" value="mouse"/>
</dbReference>
<dbReference type="EvolutionaryTrace" id="P12367"/>
<dbReference type="PRO" id="PR:P12367"/>
<dbReference type="Proteomes" id="UP000000589">
    <property type="component" value="Unplaced"/>
</dbReference>
<dbReference type="RNAct" id="P12367">
    <property type="molecule type" value="protein"/>
</dbReference>
<dbReference type="GO" id="GO:0005952">
    <property type="term" value="C:cAMP-dependent protein kinase complex"/>
    <property type="evidence" value="ECO:0000314"/>
    <property type="project" value="MGI"/>
</dbReference>
<dbReference type="GO" id="GO:0005737">
    <property type="term" value="C:cytoplasm"/>
    <property type="evidence" value="ECO:0000314"/>
    <property type="project" value="MGI"/>
</dbReference>
<dbReference type="GO" id="GO:0005829">
    <property type="term" value="C:cytosol"/>
    <property type="evidence" value="ECO:0000304"/>
    <property type="project" value="Reactome"/>
</dbReference>
<dbReference type="GO" id="GO:0098978">
    <property type="term" value="C:glutamatergic synapse"/>
    <property type="evidence" value="ECO:0000314"/>
    <property type="project" value="SynGO"/>
</dbReference>
<dbReference type="GO" id="GO:0005886">
    <property type="term" value="C:plasma membrane"/>
    <property type="evidence" value="ECO:0007669"/>
    <property type="project" value="UniProtKB-SubCell"/>
</dbReference>
<dbReference type="GO" id="GO:0045202">
    <property type="term" value="C:synapse"/>
    <property type="evidence" value="ECO:0000314"/>
    <property type="project" value="SynGO"/>
</dbReference>
<dbReference type="GO" id="GO:0030552">
    <property type="term" value="F:cAMP binding"/>
    <property type="evidence" value="ECO:0007669"/>
    <property type="project" value="UniProtKB-KW"/>
</dbReference>
<dbReference type="GO" id="GO:0008603">
    <property type="term" value="F:cAMP-dependent protein kinase regulator activity"/>
    <property type="evidence" value="ECO:0007669"/>
    <property type="project" value="InterPro"/>
</dbReference>
<dbReference type="GO" id="GO:0050804">
    <property type="term" value="P:modulation of chemical synaptic transmission"/>
    <property type="evidence" value="ECO:0000314"/>
    <property type="project" value="SynGO"/>
</dbReference>
<dbReference type="CDD" id="cd00038">
    <property type="entry name" value="CAP_ED"/>
    <property type="match status" value="2"/>
</dbReference>
<dbReference type="CDD" id="cd12103">
    <property type="entry name" value="DD_RIIalpha_PKA"/>
    <property type="match status" value="1"/>
</dbReference>
<dbReference type="FunFam" id="2.60.120.10:FF:000017">
    <property type="entry name" value="cAMP-dependent protein kinase type II regulatory subunit"/>
    <property type="match status" value="1"/>
</dbReference>
<dbReference type="FunFam" id="1.20.890.10:FF:000002">
    <property type="entry name" value="cAMP-dependent protein kinase type II-alpha regulatory subunit"/>
    <property type="match status" value="1"/>
</dbReference>
<dbReference type="FunFam" id="2.60.120.10:FF:000027">
    <property type="entry name" value="Protein kinase cAMP-dependent type II regulatory subunit alpha"/>
    <property type="match status" value="1"/>
</dbReference>
<dbReference type="Gene3D" id="1.20.890.10">
    <property type="entry name" value="cAMP-dependent protein kinase regulatory subunit, dimerization-anchoring domain"/>
    <property type="match status" value="1"/>
</dbReference>
<dbReference type="Gene3D" id="2.60.120.10">
    <property type="entry name" value="Jelly Rolls"/>
    <property type="match status" value="2"/>
</dbReference>
<dbReference type="InterPro" id="IPR050503">
    <property type="entry name" value="cAMP-dep_PK_reg_su-like"/>
</dbReference>
<dbReference type="InterPro" id="IPR012198">
    <property type="entry name" value="cAMP_dep_PK_reg_su"/>
</dbReference>
<dbReference type="InterPro" id="IPR003117">
    <property type="entry name" value="cAMP_dep_PK_reg_su_I/II_a/b"/>
</dbReference>
<dbReference type="InterPro" id="IPR018488">
    <property type="entry name" value="cNMP-bd_CS"/>
</dbReference>
<dbReference type="InterPro" id="IPR000595">
    <property type="entry name" value="cNMP-bd_dom"/>
</dbReference>
<dbReference type="InterPro" id="IPR018490">
    <property type="entry name" value="cNMP-bd_dom_sf"/>
</dbReference>
<dbReference type="InterPro" id="IPR014710">
    <property type="entry name" value="RmlC-like_jellyroll"/>
</dbReference>
<dbReference type="PANTHER" id="PTHR11635">
    <property type="entry name" value="CAMP-DEPENDENT PROTEIN KINASE REGULATORY CHAIN"/>
    <property type="match status" value="1"/>
</dbReference>
<dbReference type="PANTHER" id="PTHR11635:SF153">
    <property type="entry name" value="CAMP-DEPENDENT PROTEIN KINASE TYPE II-ALPHA REGULATORY SUBUNIT"/>
    <property type="match status" value="1"/>
</dbReference>
<dbReference type="Pfam" id="PF00027">
    <property type="entry name" value="cNMP_binding"/>
    <property type="match status" value="2"/>
</dbReference>
<dbReference type="Pfam" id="PF02197">
    <property type="entry name" value="RIIa"/>
    <property type="match status" value="1"/>
</dbReference>
<dbReference type="PIRSF" id="PIRSF000548">
    <property type="entry name" value="PK_regulatory"/>
    <property type="match status" value="1"/>
</dbReference>
<dbReference type="PRINTS" id="PR00103">
    <property type="entry name" value="CAMPKINASE"/>
</dbReference>
<dbReference type="SMART" id="SM00100">
    <property type="entry name" value="cNMP"/>
    <property type="match status" value="2"/>
</dbReference>
<dbReference type="SMART" id="SM00394">
    <property type="entry name" value="RIIa"/>
    <property type="match status" value="1"/>
</dbReference>
<dbReference type="SUPFAM" id="SSF51206">
    <property type="entry name" value="cAMP-binding domain-like"/>
    <property type="match status" value="2"/>
</dbReference>
<dbReference type="SUPFAM" id="SSF47391">
    <property type="entry name" value="Dimerization-anchoring domain of cAMP-dependent PK regulatory subunit"/>
    <property type="match status" value="1"/>
</dbReference>
<dbReference type="PROSITE" id="PS00888">
    <property type="entry name" value="CNMP_BINDING_1"/>
    <property type="match status" value="2"/>
</dbReference>
<dbReference type="PROSITE" id="PS00889">
    <property type="entry name" value="CNMP_BINDING_2"/>
    <property type="match status" value="1"/>
</dbReference>
<dbReference type="PROSITE" id="PS50042">
    <property type="entry name" value="CNMP_BINDING_3"/>
    <property type="match status" value="2"/>
</dbReference>